<comment type="function">
    <text evidence="1">This protein is involved in the repair of mismatches in DNA. It is possible that it carries out the mismatch recognition step. This protein has a weak ATPase activity.</text>
</comment>
<comment type="similarity">
    <text evidence="1">Belongs to the DNA mismatch repair MutS family.</text>
</comment>
<accession>Q66EB5</accession>
<name>MUTS_YERPS</name>
<organism>
    <name type="scientific">Yersinia pseudotuberculosis serotype I (strain IP32953)</name>
    <dbReference type="NCBI Taxonomy" id="273123"/>
    <lineage>
        <taxon>Bacteria</taxon>
        <taxon>Pseudomonadati</taxon>
        <taxon>Pseudomonadota</taxon>
        <taxon>Gammaproteobacteria</taxon>
        <taxon>Enterobacterales</taxon>
        <taxon>Yersiniaceae</taxon>
        <taxon>Yersinia</taxon>
    </lineage>
</organism>
<reference key="1">
    <citation type="journal article" date="2004" name="Proc. Natl. Acad. Sci. U.S.A.">
        <title>Insights into the evolution of Yersinia pestis through whole-genome comparison with Yersinia pseudotuberculosis.</title>
        <authorList>
            <person name="Chain P.S.G."/>
            <person name="Carniel E."/>
            <person name="Larimer F.W."/>
            <person name="Lamerdin J."/>
            <person name="Stoutland P.O."/>
            <person name="Regala W.M."/>
            <person name="Georgescu A.M."/>
            <person name="Vergez L.M."/>
            <person name="Land M.L."/>
            <person name="Motin V.L."/>
            <person name="Brubaker R.R."/>
            <person name="Fowler J."/>
            <person name="Hinnebusch J."/>
            <person name="Marceau M."/>
            <person name="Medigue C."/>
            <person name="Simonet M."/>
            <person name="Chenal-Francisque V."/>
            <person name="Souza B."/>
            <person name="Dacheux D."/>
            <person name="Elliott J.M."/>
            <person name="Derbise A."/>
            <person name="Hauser L.J."/>
            <person name="Garcia E."/>
        </authorList>
    </citation>
    <scope>NUCLEOTIDE SEQUENCE [LARGE SCALE GENOMIC DNA]</scope>
    <source>
        <strain>IP32953</strain>
    </source>
</reference>
<feature type="chain" id="PRO_0000224420" description="DNA mismatch repair protein MutS">
    <location>
        <begin position="1"/>
        <end position="851"/>
    </location>
</feature>
<feature type="binding site" evidence="1">
    <location>
        <begin position="614"/>
        <end position="621"/>
    </location>
    <ligand>
        <name>ATP</name>
        <dbReference type="ChEBI" id="CHEBI:30616"/>
    </ligand>
</feature>
<sequence>MKNNDKLDSHTPMMQQYLRLKAQHPEILLFYRMGDFYELFYSDAKRASQLLDISLTKRGASAGEPIPMAGVPYHSIENYLAKLVQLGESAAICEQIGDPATSKGPVERKVVRIVTPGTISDEALLQERQDNLLAAIWQDAKGFGYATLDISSGRFRVAEPADLETMAAELQRTNPAELLYPENFEPMSLIEHRHGLRRRPLWEFELDTAKQQLNLQFGTRDLIGFGVEQAHLALRAAGCLLQYVKDTQRTSLPHIRGLTMERQQDGIIMDAATRRNLELTQNLSGGSENTLAAILDCSVTPMGSRMLKRWLHMPIRDIRVLTDRQQAIGGLQDIAAELQTPLRQVGDLERILARLALRTARPRDLARMRHAFQQLPEIHRLLQPIDVPHVQNLLSQVGQFDELQDLLERAIVETPPVLVRDGGVIASGYNAELDEWRALADGATDYLDRLEIREREKLGLDTLKVGFNGVHGYYIQVSRGQSHLVPIHYVRRQTLKNAERYIIPELKEYEDKVLTSKGKALAIEKGLYEEIFDLLLPHLPELQLSANALAELDVLANLAERAETLNYSCPTLSDKPGIKIMGGRHPVVEQVLKEPFISNPLTLSPQRRMLIITGPNMGGKSTYMRQTALIVLLAHLGSYVPADQATIGPIDRIFTRVGAADDLASGRSTFMVEMTETANILHNATEQSLVLMDEIGRGTSTYDGLSLAWACAENLASRIKAMTLFATHYFELTTLPEKMEGVANVHLDALEHGETIAFMHSVQEGAASKSYGLAVAALAGVPRDVIKRARQKLKELESLSNNAAASTIDGSQMTLLNEEIPPAVEALEALDPDSLSPRQALEWIYRLKNMV</sequence>
<gene>
    <name evidence="1" type="primary">mutS</name>
    <name type="ordered locus">YPTB0778</name>
</gene>
<keyword id="KW-0067">ATP-binding</keyword>
<keyword id="KW-0227">DNA damage</keyword>
<keyword id="KW-0234">DNA repair</keyword>
<keyword id="KW-0238">DNA-binding</keyword>
<keyword id="KW-0547">Nucleotide-binding</keyword>
<dbReference type="EMBL" id="BX936398">
    <property type="protein sequence ID" value="CAH20018.1"/>
    <property type="molecule type" value="Genomic_DNA"/>
</dbReference>
<dbReference type="RefSeq" id="WP_011191781.1">
    <property type="nucleotide sequence ID" value="NC_006155.1"/>
</dbReference>
<dbReference type="SMR" id="Q66EB5"/>
<dbReference type="KEGG" id="ypo:BZ17_1778"/>
<dbReference type="KEGG" id="yps:YPTB0778"/>
<dbReference type="PATRIC" id="fig|273123.14.peg.1883"/>
<dbReference type="Proteomes" id="UP000001011">
    <property type="component" value="Chromosome"/>
</dbReference>
<dbReference type="GO" id="GO:0005829">
    <property type="term" value="C:cytosol"/>
    <property type="evidence" value="ECO:0007669"/>
    <property type="project" value="TreeGrafter"/>
</dbReference>
<dbReference type="GO" id="GO:0005524">
    <property type="term" value="F:ATP binding"/>
    <property type="evidence" value="ECO:0007669"/>
    <property type="project" value="UniProtKB-UniRule"/>
</dbReference>
<dbReference type="GO" id="GO:0140664">
    <property type="term" value="F:ATP-dependent DNA damage sensor activity"/>
    <property type="evidence" value="ECO:0007669"/>
    <property type="project" value="InterPro"/>
</dbReference>
<dbReference type="GO" id="GO:0003684">
    <property type="term" value="F:damaged DNA binding"/>
    <property type="evidence" value="ECO:0007669"/>
    <property type="project" value="UniProtKB-UniRule"/>
</dbReference>
<dbReference type="GO" id="GO:0030983">
    <property type="term" value="F:mismatched DNA binding"/>
    <property type="evidence" value="ECO:0007669"/>
    <property type="project" value="InterPro"/>
</dbReference>
<dbReference type="GO" id="GO:0006298">
    <property type="term" value="P:mismatch repair"/>
    <property type="evidence" value="ECO:0007669"/>
    <property type="project" value="UniProtKB-UniRule"/>
</dbReference>
<dbReference type="CDD" id="cd03284">
    <property type="entry name" value="ABC_MutS1"/>
    <property type="match status" value="1"/>
</dbReference>
<dbReference type="FunFam" id="1.10.1420.10:FF:000002">
    <property type="entry name" value="DNA mismatch repair protein MutS"/>
    <property type="match status" value="1"/>
</dbReference>
<dbReference type="FunFam" id="3.30.420.110:FF:000001">
    <property type="entry name" value="DNA mismatch repair protein MutS"/>
    <property type="match status" value="1"/>
</dbReference>
<dbReference type="FunFam" id="3.40.1170.10:FF:000001">
    <property type="entry name" value="DNA mismatch repair protein MutS"/>
    <property type="match status" value="1"/>
</dbReference>
<dbReference type="FunFam" id="3.40.50.300:FF:000283">
    <property type="entry name" value="DNA mismatch repair protein MutS"/>
    <property type="match status" value="1"/>
</dbReference>
<dbReference type="Gene3D" id="1.10.1420.10">
    <property type="match status" value="2"/>
</dbReference>
<dbReference type="Gene3D" id="6.10.140.430">
    <property type="match status" value="1"/>
</dbReference>
<dbReference type="Gene3D" id="3.40.1170.10">
    <property type="entry name" value="DNA repair protein MutS, domain I"/>
    <property type="match status" value="1"/>
</dbReference>
<dbReference type="Gene3D" id="3.30.420.110">
    <property type="entry name" value="MutS, connector domain"/>
    <property type="match status" value="1"/>
</dbReference>
<dbReference type="Gene3D" id="3.40.50.300">
    <property type="entry name" value="P-loop containing nucleotide triphosphate hydrolases"/>
    <property type="match status" value="1"/>
</dbReference>
<dbReference type="HAMAP" id="MF_00096">
    <property type="entry name" value="MutS"/>
    <property type="match status" value="1"/>
</dbReference>
<dbReference type="InterPro" id="IPR005748">
    <property type="entry name" value="DNA_mismatch_repair_MutS"/>
</dbReference>
<dbReference type="InterPro" id="IPR007695">
    <property type="entry name" value="DNA_mismatch_repair_MutS-lik_N"/>
</dbReference>
<dbReference type="InterPro" id="IPR017261">
    <property type="entry name" value="DNA_mismatch_repair_MutS/MSH"/>
</dbReference>
<dbReference type="InterPro" id="IPR000432">
    <property type="entry name" value="DNA_mismatch_repair_MutS_C"/>
</dbReference>
<dbReference type="InterPro" id="IPR007861">
    <property type="entry name" value="DNA_mismatch_repair_MutS_clamp"/>
</dbReference>
<dbReference type="InterPro" id="IPR007696">
    <property type="entry name" value="DNA_mismatch_repair_MutS_core"/>
</dbReference>
<dbReference type="InterPro" id="IPR016151">
    <property type="entry name" value="DNA_mismatch_repair_MutS_N"/>
</dbReference>
<dbReference type="InterPro" id="IPR036187">
    <property type="entry name" value="DNA_mismatch_repair_MutS_sf"/>
</dbReference>
<dbReference type="InterPro" id="IPR007860">
    <property type="entry name" value="DNA_mmatch_repair_MutS_con_dom"/>
</dbReference>
<dbReference type="InterPro" id="IPR045076">
    <property type="entry name" value="MutS"/>
</dbReference>
<dbReference type="InterPro" id="IPR036678">
    <property type="entry name" value="MutS_con_dom_sf"/>
</dbReference>
<dbReference type="InterPro" id="IPR027417">
    <property type="entry name" value="P-loop_NTPase"/>
</dbReference>
<dbReference type="NCBIfam" id="TIGR01070">
    <property type="entry name" value="mutS1"/>
    <property type="match status" value="1"/>
</dbReference>
<dbReference type="NCBIfam" id="NF003810">
    <property type="entry name" value="PRK05399.1"/>
    <property type="match status" value="1"/>
</dbReference>
<dbReference type="PANTHER" id="PTHR11361:SF34">
    <property type="entry name" value="DNA MISMATCH REPAIR PROTEIN MSH1, MITOCHONDRIAL"/>
    <property type="match status" value="1"/>
</dbReference>
<dbReference type="PANTHER" id="PTHR11361">
    <property type="entry name" value="DNA MISMATCH REPAIR PROTEIN MUTS FAMILY MEMBER"/>
    <property type="match status" value="1"/>
</dbReference>
<dbReference type="Pfam" id="PF01624">
    <property type="entry name" value="MutS_I"/>
    <property type="match status" value="1"/>
</dbReference>
<dbReference type="Pfam" id="PF05188">
    <property type="entry name" value="MutS_II"/>
    <property type="match status" value="1"/>
</dbReference>
<dbReference type="Pfam" id="PF05192">
    <property type="entry name" value="MutS_III"/>
    <property type="match status" value="1"/>
</dbReference>
<dbReference type="Pfam" id="PF05190">
    <property type="entry name" value="MutS_IV"/>
    <property type="match status" value="1"/>
</dbReference>
<dbReference type="Pfam" id="PF00488">
    <property type="entry name" value="MutS_V"/>
    <property type="match status" value="1"/>
</dbReference>
<dbReference type="PIRSF" id="PIRSF037677">
    <property type="entry name" value="DNA_mis_repair_Msh6"/>
    <property type="match status" value="1"/>
</dbReference>
<dbReference type="SMART" id="SM00534">
    <property type="entry name" value="MUTSac"/>
    <property type="match status" value="1"/>
</dbReference>
<dbReference type="SMART" id="SM00533">
    <property type="entry name" value="MUTSd"/>
    <property type="match status" value="1"/>
</dbReference>
<dbReference type="SUPFAM" id="SSF55271">
    <property type="entry name" value="DNA repair protein MutS, domain I"/>
    <property type="match status" value="1"/>
</dbReference>
<dbReference type="SUPFAM" id="SSF53150">
    <property type="entry name" value="DNA repair protein MutS, domain II"/>
    <property type="match status" value="1"/>
</dbReference>
<dbReference type="SUPFAM" id="SSF48334">
    <property type="entry name" value="DNA repair protein MutS, domain III"/>
    <property type="match status" value="1"/>
</dbReference>
<dbReference type="SUPFAM" id="SSF52540">
    <property type="entry name" value="P-loop containing nucleoside triphosphate hydrolases"/>
    <property type="match status" value="1"/>
</dbReference>
<dbReference type="PROSITE" id="PS00486">
    <property type="entry name" value="DNA_MISMATCH_REPAIR_2"/>
    <property type="match status" value="1"/>
</dbReference>
<protein>
    <recommendedName>
        <fullName evidence="1">DNA mismatch repair protein MutS</fullName>
    </recommendedName>
</protein>
<proteinExistence type="inferred from homology"/>
<evidence type="ECO:0000255" key="1">
    <source>
        <dbReference type="HAMAP-Rule" id="MF_00096"/>
    </source>
</evidence>